<comment type="function">
    <text evidence="1">Catalyzes the last two sequential reactions in the de novo biosynthetic pathway for UDP-N-acetylglucosamine (UDP-GlcNAc). The C-terminal domain catalyzes the transfer of acetyl group from acetyl coenzyme A to glucosamine-1-phosphate (GlcN-1-P) to produce N-acetylglucosamine-1-phosphate (GlcNAc-1-P), which is converted into UDP-GlcNAc by the transfer of uridine 5-monophosphate (from uridine 5-triphosphate), a reaction catalyzed by the N-terminal domain.</text>
</comment>
<comment type="catalytic activity">
    <reaction evidence="1">
        <text>alpha-D-glucosamine 1-phosphate + acetyl-CoA = N-acetyl-alpha-D-glucosamine 1-phosphate + CoA + H(+)</text>
        <dbReference type="Rhea" id="RHEA:13725"/>
        <dbReference type="ChEBI" id="CHEBI:15378"/>
        <dbReference type="ChEBI" id="CHEBI:57287"/>
        <dbReference type="ChEBI" id="CHEBI:57288"/>
        <dbReference type="ChEBI" id="CHEBI:57776"/>
        <dbReference type="ChEBI" id="CHEBI:58516"/>
        <dbReference type="EC" id="2.3.1.157"/>
    </reaction>
</comment>
<comment type="catalytic activity">
    <reaction evidence="1">
        <text>N-acetyl-alpha-D-glucosamine 1-phosphate + UTP + H(+) = UDP-N-acetyl-alpha-D-glucosamine + diphosphate</text>
        <dbReference type="Rhea" id="RHEA:13509"/>
        <dbReference type="ChEBI" id="CHEBI:15378"/>
        <dbReference type="ChEBI" id="CHEBI:33019"/>
        <dbReference type="ChEBI" id="CHEBI:46398"/>
        <dbReference type="ChEBI" id="CHEBI:57705"/>
        <dbReference type="ChEBI" id="CHEBI:57776"/>
        <dbReference type="EC" id="2.7.7.23"/>
    </reaction>
</comment>
<comment type="cofactor">
    <cofactor evidence="1">
        <name>Mg(2+)</name>
        <dbReference type="ChEBI" id="CHEBI:18420"/>
    </cofactor>
    <text evidence="1">Binds 1 Mg(2+) ion per subunit.</text>
</comment>
<comment type="pathway">
    <text evidence="1">Nucleotide-sugar biosynthesis; UDP-N-acetyl-alpha-D-glucosamine biosynthesis; N-acetyl-alpha-D-glucosamine 1-phosphate from alpha-D-glucosamine 6-phosphate (route II): step 2/2.</text>
</comment>
<comment type="pathway">
    <text evidence="1">Nucleotide-sugar biosynthesis; UDP-N-acetyl-alpha-D-glucosamine biosynthesis; UDP-N-acetyl-alpha-D-glucosamine from N-acetyl-alpha-D-glucosamine 1-phosphate: step 1/1.</text>
</comment>
<comment type="pathway">
    <text evidence="1">Bacterial outer membrane biogenesis; LPS lipid A biosynthesis.</text>
</comment>
<comment type="subunit">
    <text evidence="1">Homotrimer.</text>
</comment>
<comment type="subcellular location">
    <subcellularLocation>
        <location evidence="1">Cytoplasm</location>
    </subcellularLocation>
</comment>
<comment type="similarity">
    <text evidence="1">In the N-terminal section; belongs to the N-acetylglucosamine-1-phosphate uridyltransferase family.</text>
</comment>
<comment type="similarity">
    <text evidence="1">In the C-terminal section; belongs to the transferase hexapeptide repeat family.</text>
</comment>
<reference key="1">
    <citation type="journal article" date="2006" name="J. Bacteriol.">
        <title>The genome sequence of the obligately chemolithoautotrophic, facultatively anaerobic bacterium Thiobacillus denitrificans.</title>
        <authorList>
            <person name="Beller H.R."/>
            <person name="Chain P.S."/>
            <person name="Letain T.E."/>
            <person name="Chakicherla A."/>
            <person name="Larimer F.W."/>
            <person name="Richardson P.M."/>
            <person name="Coleman M.A."/>
            <person name="Wood A.P."/>
            <person name="Kelly D.P."/>
        </authorList>
    </citation>
    <scope>NUCLEOTIDE SEQUENCE [LARGE SCALE GENOMIC DNA]</scope>
    <source>
        <strain>ATCC 25259 / T1</strain>
    </source>
</reference>
<organism>
    <name type="scientific">Thiobacillus denitrificans (strain ATCC 25259 / T1)</name>
    <dbReference type="NCBI Taxonomy" id="292415"/>
    <lineage>
        <taxon>Bacteria</taxon>
        <taxon>Pseudomonadati</taxon>
        <taxon>Pseudomonadota</taxon>
        <taxon>Betaproteobacteria</taxon>
        <taxon>Nitrosomonadales</taxon>
        <taxon>Thiobacillaceae</taxon>
        <taxon>Thiobacillus</taxon>
    </lineage>
</organism>
<protein>
    <recommendedName>
        <fullName evidence="1">Bifunctional protein GlmU</fullName>
    </recommendedName>
    <domain>
        <recommendedName>
            <fullName evidence="1">UDP-N-acetylglucosamine pyrophosphorylase</fullName>
            <ecNumber evidence="1">2.7.7.23</ecNumber>
        </recommendedName>
        <alternativeName>
            <fullName evidence="1">N-acetylglucosamine-1-phosphate uridyltransferase</fullName>
        </alternativeName>
    </domain>
    <domain>
        <recommendedName>
            <fullName evidence="1">Glucosamine-1-phosphate N-acetyltransferase</fullName>
            <ecNumber evidence="1">2.3.1.157</ecNumber>
        </recommendedName>
    </domain>
</protein>
<keyword id="KW-0012">Acyltransferase</keyword>
<keyword id="KW-0133">Cell shape</keyword>
<keyword id="KW-0961">Cell wall biogenesis/degradation</keyword>
<keyword id="KW-0963">Cytoplasm</keyword>
<keyword id="KW-0460">Magnesium</keyword>
<keyword id="KW-0479">Metal-binding</keyword>
<keyword id="KW-0511">Multifunctional enzyme</keyword>
<keyword id="KW-0548">Nucleotidyltransferase</keyword>
<keyword id="KW-0573">Peptidoglycan synthesis</keyword>
<keyword id="KW-1185">Reference proteome</keyword>
<keyword id="KW-0677">Repeat</keyword>
<keyword id="KW-0808">Transferase</keyword>
<sequence length="458" mass="48774">MHPKLDILILAAGKGTRMRSDLPKVLHQLAGRPLLGHVVATAQALGAARTCVVYGFGGEAVPQAMAEATLSFVLQAEQHGTGHAVKQALPQLADDGVTLVLYGDVPLIHTTTLAPLAAAADAGKFGLLTVNLAHPDGYGRIVRENARVARIVEHKDASAAERAIQEVNTGILAVPTRHLKRWIGELRNDNAQGEYYLTDIVALAVRDGVEIETHQPQHDWEVLGVNSKAQLAELERIHQNEVAQRLLADGVTLMDPARLDVRGSLVCGRDVTIDVNCVFEGRVELGDGVQIGANCVLRNVSIAAGTRLDAFTLIDDATIGEAGRLGPFSRIRPGTRLARDVHVGNFVEIKNSAIDAGSKINHLSYVGDTTMGQRVNIGAGTITCNYDGANKHRTVIEDDVFVGSDTQLVAPVTVGQGATLGAGTTLTRDAPPGELTLSRAKQQTISGWKRPIKPKKEG</sequence>
<name>GLMU_THIDA</name>
<evidence type="ECO:0000255" key="1">
    <source>
        <dbReference type="HAMAP-Rule" id="MF_01631"/>
    </source>
</evidence>
<feature type="chain" id="PRO_0000233871" description="Bifunctional protein GlmU">
    <location>
        <begin position="1"/>
        <end position="458"/>
    </location>
</feature>
<feature type="region of interest" description="Pyrophosphorylase" evidence="1">
    <location>
        <begin position="1"/>
        <end position="228"/>
    </location>
</feature>
<feature type="region of interest" description="Linker" evidence="1">
    <location>
        <begin position="229"/>
        <end position="249"/>
    </location>
</feature>
<feature type="region of interest" description="N-acetyltransferase" evidence="1">
    <location>
        <begin position="250"/>
        <end position="458"/>
    </location>
</feature>
<feature type="active site" description="Proton acceptor" evidence="1">
    <location>
        <position position="362"/>
    </location>
</feature>
<feature type="binding site" evidence="1">
    <location>
        <begin position="10"/>
        <end position="13"/>
    </location>
    <ligand>
        <name>UDP-N-acetyl-alpha-D-glucosamine</name>
        <dbReference type="ChEBI" id="CHEBI:57705"/>
    </ligand>
</feature>
<feature type="binding site" evidence="1">
    <location>
        <position position="24"/>
    </location>
    <ligand>
        <name>UDP-N-acetyl-alpha-D-glucosamine</name>
        <dbReference type="ChEBI" id="CHEBI:57705"/>
    </ligand>
</feature>
<feature type="binding site" evidence="1">
    <location>
        <position position="75"/>
    </location>
    <ligand>
        <name>UDP-N-acetyl-alpha-D-glucosamine</name>
        <dbReference type="ChEBI" id="CHEBI:57705"/>
    </ligand>
</feature>
<feature type="binding site" evidence="1">
    <location>
        <begin position="80"/>
        <end position="81"/>
    </location>
    <ligand>
        <name>UDP-N-acetyl-alpha-D-glucosamine</name>
        <dbReference type="ChEBI" id="CHEBI:57705"/>
    </ligand>
</feature>
<feature type="binding site" evidence="1">
    <location>
        <begin position="102"/>
        <end position="104"/>
    </location>
    <ligand>
        <name>UDP-N-acetyl-alpha-D-glucosamine</name>
        <dbReference type="ChEBI" id="CHEBI:57705"/>
    </ligand>
</feature>
<feature type="binding site" evidence="1">
    <location>
        <position position="104"/>
    </location>
    <ligand>
        <name>Mg(2+)</name>
        <dbReference type="ChEBI" id="CHEBI:18420"/>
    </ligand>
</feature>
<feature type="binding site" evidence="1">
    <location>
        <position position="139"/>
    </location>
    <ligand>
        <name>UDP-N-acetyl-alpha-D-glucosamine</name>
        <dbReference type="ChEBI" id="CHEBI:57705"/>
    </ligand>
</feature>
<feature type="binding site" evidence="1">
    <location>
        <position position="153"/>
    </location>
    <ligand>
        <name>UDP-N-acetyl-alpha-D-glucosamine</name>
        <dbReference type="ChEBI" id="CHEBI:57705"/>
    </ligand>
</feature>
<feature type="binding site" evidence="1">
    <location>
        <position position="168"/>
    </location>
    <ligand>
        <name>UDP-N-acetyl-alpha-D-glucosamine</name>
        <dbReference type="ChEBI" id="CHEBI:57705"/>
    </ligand>
</feature>
<feature type="binding site" evidence="1">
    <location>
        <position position="226"/>
    </location>
    <ligand>
        <name>Mg(2+)</name>
        <dbReference type="ChEBI" id="CHEBI:18420"/>
    </ligand>
</feature>
<feature type="binding site" evidence="1">
    <location>
        <position position="226"/>
    </location>
    <ligand>
        <name>UDP-N-acetyl-alpha-D-glucosamine</name>
        <dbReference type="ChEBI" id="CHEBI:57705"/>
    </ligand>
</feature>
<feature type="binding site" evidence="1">
    <location>
        <position position="332"/>
    </location>
    <ligand>
        <name>UDP-N-acetyl-alpha-D-glucosamine</name>
        <dbReference type="ChEBI" id="CHEBI:57705"/>
    </ligand>
</feature>
<feature type="binding site" evidence="1">
    <location>
        <position position="350"/>
    </location>
    <ligand>
        <name>UDP-N-acetyl-alpha-D-glucosamine</name>
        <dbReference type="ChEBI" id="CHEBI:57705"/>
    </ligand>
</feature>
<feature type="binding site" evidence="1">
    <location>
        <position position="365"/>
    </location>
    <ligand>
        <name>UDP-N-acetyl-alpha-D-glucosamine</name>
        <dbReference type="ChEBI" id="CHEBI:57705"/>
    </ligand>
</feature>
<feature type="binding site" evidence="1">
    <location>
        <position position="376"/>
    </location>
    <ligand>
        <name>UDP-N-acetyl-alpha-D-glucosamine</name>
        <dbReference type="ChEBI" id="CHEBI:57705"/>
    </ligand>
</feature>
<feature type="binding site" evidence="1">
    <location>
        <position position="379"/>
    </location>
    <ligand>
        <name>acetyl-CoA</name>
        <dbReference type="ChEBI" id="CHEBI:57288"/>
    </ligand>
</feature>
<feature type="binding site" evidence="1">
    <location>
        <begin position="385"/>
        <end position="386"/>
    </location>
    <ligand>
        <name>acetyl-CoA</name>
        <dbReference type="ChEBI" id="CHEBI:57288"/>
    </ligand>
</feature>
<feature type="binding site" evidence="1">
    <location>
        <position position="404"/>
    </location>
    <ligand>
        <name>acetyl-CoA</name>
        <dbReference type="ChEBI" id="CHEBI:57288"/>
    </ligand>
</feature>
<feature type="binding site" evidence="1">
    <location>
        <position position="422"/>
    </location>
    <ligand>
        <name>acetyl-CoA</name>
        <dbReference type="ChEBI" id="CHEBI:57288"/>
    </ligand>
</feature>
<feature type="binding site" evidence="1">
    <location>
        <position position="439"/>
    </location>
    <ligand>
        <name>acetyl-CoA</name>
        <dbReference type="ChEBI" id="CHEBI:57288"/>
    </ligand>
</feature>
<accession>Q3SF69</accession>
<gene>
    <name evidence="1" type="primary">glmU</name>
    <name type="ordered locus">Tbd_2794</name>
</gene>
<proteinExistence type="inferred from homology"/>
<dbReference type="EC" id="2.7.7.23" evidence="1"/>
<dbReference type="EC" id="2.3.1.157" evidence="1"/>
<dbReference type="EMBL" id="CP000116">
    <property type="protein sequence ID" value="AAZ98747.1"/>
    <property type="molecule type" value="Genomic_DNA"/>
</dbReference>
<dbReference type="RefSeq" id="WP_011313306.1">
    <property type="nucleotide sequence ID" value="NC_007404.1"/>
</dbReference>
<dbReference type="SMR" id="Q3SF69"/>
<dbReference type="STRING" id="292415.Tbd_2794"/>
<dbReference type="KEGG" id="tbd:Tbd_2794"/>
<dbReference type="eggNOG" id="COG1207">
    <property type="taxonomic scope" value="Bacteria"/>
</dbReference>
<dbReference type="HOGENOM" id="CLU_029499_15_2_4"/>
<dbReference type="OrthoDB" id="9775031at2"/>
<dbReference type="UniPathway" id="UPA00113">
    <property type="reaction ID" value="UER00532"/>
</dbReference>
<dbReference type="UniPathway" id="UPA00113">
    <property type="reaction ID" value="UER00533"/>
</dbReference>
<dbReference type="UniPathway" id="UPA00973"/>
<dbReference type="Proteomes" id="UP000008291">
    <property type="component" value="Chromosome"/>
</dbReference>
<dbReference type="GO" id="GO:0005737">
    <property type="term" value="C:cytoplasm"/>
    <property type="evidence" value="ECO:0007669"/>
    <property type="project" value="UniProtKB-SubCell"/>
</dbReference>
<dbReference type="GO" id="GO:0016020">
    <property type="term" value="C:membrane"/>
    <property type="evidence" value="ECO:0007669"/>
    <property type="project" value="GOC"/>
</dbReference>
<dbReference type="GO" id="GO:0019134">
    <property type="term" value="F:glucosamine-1-phosphate N-acetyltransferase activity"/>
    <property type="evidence" value="ECO:0007669"/>
    <property type="project" value="UniProtKB-UniRule"/>
</dbReference>
<dbReference type="GO" id="GO:0000287">
    <property type="term" value="F:magnesium ion binding"/>
    <property type="evidence" value="ECO:0007669"/>
    <property type="project" value="UniProtKB-UniRule"/>
</dbReference>
<dbReference type="GO" id="GO:0003977">
    <property type="term" value="F:UDP-N-acetylglucosamine diphosphorylase activity"/>
    <property type="evidence" value="ECO:0007669"/>
    <property type="project" value="UniProtKB-UniRule"/>
</dbReference>
<dbReference type="GO" id="GO:0000902">
    <property type="term" value="P:cell morphogenesis"/>
    <property type="evidence" value="ECO:0007669"/>
    <property type="project" value="UniProtKB-UniRule"/>
</dbReference>
<dbReference type="GO" id="GO:0071555">
    <property type="term" value="P:cell wall organization"/>
    <property type="evidence" value="ECO:0007669"/>
    <property type="project" value="UniProtKB-KW"/>
</dbReference>
<dbReference type="GO" id="GO:0009245">
    <property type="term" value="P:lipid A biosynthetic process"/>
    <property type="evidence" value="ECO:0007669"/>
    <property type="project" value="UniProtKB-UniRule"/>
</dbReference>
<dbReference type="GO" id="GO:0009252">
    <property type="term" value="P:peptidoglycan biosynthetic process"/>
    <property type="evidence" value="ECO:0007669"/>
    <property type="project" value="UniProtKB-UniRule"/>
</dbReference>
<dbReference type="GO" id="GO:0008360">
    <property type="term" value="P:regulation of cell shape"/>
    <property type="evidence" value="ECO:0007669"/>
    <property type="project" value="UniProtKB-KW"/>
</dbReference>
<dbReference type="GO" id="GO:0006048">
    <property type="term" value="P:UDP-N-acetylglucosamine biosynthetic process"/>
    <property type="evidence" value="ECO:0007669"/>
    <property type="project" value="UniProtKB-UniPathway"/>
</dbReference>
<dbReference type="CDD" id="cd02540">
    <property type="entry name" value="GT2_GlmU_N_bac"/>
    <property type="match status" value="1"/>
</dbReference>
<dbReference type="CDD" id="cd03353">
    <property type="entry name" value="LbH_GlmU_C"/>
    <property type="match status" value="1"/>
</dbReference>
<dbReference type="Gene3D" id="2.160.10.10">
    <property type="entry name" value="Hexapeptide repeat proteins"/>
    <property type="match status" value="1"/>
</dbReference>
<dbReference type="Gene3D" id="3.90.550.10">
    <property type="entry name" value="Spore Coat Polysaccharide Biosynthesis Protein SpsA, Chain A"/>
    <property type="match status" value="1"/>
</dbReference>
<dbReference type="HAMAP" id="MF_01631">
    <property type="entry name" value="GlmU"/>
    <property type="match status" value="1"/>
</dbReference>
<dbReference type="InterPro" id="IPR005882">
    <property type="entry name" value="Bifunctional_GlmU"/>
</dbReference>
<dbReference type="InterPro" id="IPR050065">
    <property type="entry name" value="GlmU-like"/>
</dbReference>
<dbReference type="InterPro" id="IPR038009">
    <property type="entry name" value="GlmU_C_LbH"/>
</dbReference>
<dbReference type="InterPro" id="IPR001451">
    <property type="entry name" value="Hexapep"/>
</dbReference>
<dbReference type="InterPro" id="IPR025877">
    <property type="entry name" value="MobA-like_NTP_Trfase"/>
</dbReference>
<dbReference type="InterPro" id="IPR029044">
    <property type="entry name" value="Nucleotide-diphossugar_trans"/>
</dbReference>
<dbReference type="InterPro" id="IPR011004">
    <property type="entry name" value="Trimer_LpxA-like_sf"/>
</dbReference>
<dbReference type="NCBIfam" id="TIGR01173">
    <property type="entry name" value="glmU"/>
    <property type="match status" value="1"/>
</dbReference>
<dbReference type="PANTHER" id="PTHR43584:SF3">
    <property type="entry name" value="BIFUNCTIONAL PROTEIN GLMU"/>
    <property type="match status" value="1"/>
</dbReference>
<dbReference type="PANTHER" id="PTHR43584">
    <property type="entry name" value="NUCLEOTIDYL TRANSFERASE"/>
    <property type="match status" value="1"/>
</dbReference>
<dbReference type="Pfam" id="PF00132">
    <property type="entry name" value="Hexapep"/>
    <property type="match status" value="2"/>
</dbReference>
<dbReference type="Pfam" id="PF12804">
    <property type="entry name" value="NTP_transf_3"/>
    <property type="match status" value="1"/>
</dbReference>
<dbReference type="SUPFAM" id="SSF53448">
    <property type="entry name" value="Nucleotide-diphospho-sugar transferases"/>
    <property type="match status" value="1"/>
</dbReference>
<dbReference type="SUPFAM" id="SSF51161">
    <property type="entry name" value="Trimeric LpxA-like enzymes"/>
    <property type="match status" value="1"/>
</dbReference>